<protein>
    <recommendedName>
        <fullName evidence="1">Probable cell division protein WhiA</fullName>
    </recommendedName>
</protein>
<proteinExistence type="inferred from homology"/>
<feature type="chain" id="PRO_0000376543" description="Probable cell division protein WhiA">
    <location>
        <begin position="1"/>
        <end position="309"/>
    </location>
</feature>
<feature type="DNA-binding region" description="H-T-H motif" evidence="1">
    <location>
        <begin position="275"/>
        <end position="309"/>
    </location>
</feature>
<comment type="function">
    <text evidence="1">Involved in cell division and chromosome segregation.</text>
</comment>
<comment type="similarity">
    <text evidence="1">Belongs to the WhiA family.</text>
</comment>
<evidence type="ECO:0000255" key="1">
    <source>
        <dbReference type="HAMAP-Rule" id="MF_01420"/>
    </source>
</evidence>
<reference key="1">
    <citation type="journal article" date="2006" name="Proc. Natl. Acad. Sci. U.S.A.">
        <title>Comparative genomics of the lactic acid bacteria.</title>
        <authorList>
            <person name="Makarova K.S."/>
            <person name="Slesarev A."/>
            <person name="Wolf Y.I."/>
            <person name="Sorokin A."/>
            <person name="Mirkin B."/>
            <person name="Koonin E.V."/>
            <person name="Pavlov A."/>
            <person name="Pavlova N."/>
            <person name="Karamychev V."/>
            <person name="Polouchine N."/>
            <person name="Shakhova V."/>
            <person name="Grigoriev I."/>
            <person name="Lou Y."/>
            <person name="Rohksar D."/>
            <person name="Lucas S."/>
            <person name="Huang K."/>
            <person name="Goodstein D.M."/>
            <person name="Hawkins T."/>
            <person name="Plengvidhya V."/>
            <person name="Welker D."/>
            <person name="Hughes J."/>
            <person name="Goh Y."/>
            <person name="Benson A."/>
            <person name="Baldwin K."/>
            <person name="Lee J.-H."/>
            <person name="Diaz-Muniz I."/>
            <person name="Dosti B."/>
            <person name="Smeianov V."/>
            <person name="Wechter W."/>
            <person name="Barabote R."/>
            <person name="Lorca G."/>
            <person name="Altermann E."/>
            <person name="Barrangou R."/>
            <person name="Ganesan B."/>
            <person name="Xie Y."/>
            <person name="Rawsthorne H."/>
            <person name="Tamir D."/>
            <person name="Parker C."/>
            <person name="Breidt F."/>
            <person name="Broadbent J.R."/>
            <person name="Hutkins R."/>
            <person name="O'Sullivan D."/>
            <person name="Steele J."/>
            <person name="Unlu G."/>
            <person name="Saier M.H. Jr."/>
            <person name="Klaenhammer T."/>
            <person name="Richardson P."/>
            <person name="Kozyavkin S."/>
            <person name="Weimer B.C."/>
            <person name="Mills D.A."/>
        </authorList>
    </citation>
    <scope>NUCLEOTIDE SEQUENCE [LARGE SCALE GENOMIC DNA]</scope>
    <source>
        <strain>ATCC 25745 / CCUG 21536 / LMG 10740 / 183-1w</strain>
    </source>
</reference>
<organism>
    <name type="scientific">Pediococcus pentosaceus (strain ATCC 25745 / CCUG 21536 / LMG 10740 / 183-1w)</name>
    <dbReference type="NCBI Taxonomy" id="278197"/>
    <lineage>
        <taxon>Bacteria</taxon>
        <taxon>Bacillati</taxon>
        <taxon>Bacillota</taxon>
        <taxon>Bacilli</taxon>
        <taxon>Lactobacillales</taxon>
        <taxon>Lactobacillaceae</taxon>
        <taxon>Pediococcus</taxon>
    </lineage>
</organism>
<accession>Q03GX4</accession>
<name>WHIA_PEDPA</name>
<gene>
    <name evidence="1" type="primary">whiA</name>
    <name type="ordered locus">PEPE_0452</name>
</gene>
<keyword id="KW-0131">Cell cycle</keyword>
<keyword id="KW-0132">Cell division</keyword>
<keyword id="KW-0238">DNA-binding</keyword>
<sequence>MSYASEVKKELTSLEVHEKNAKAELMALIRMNGAIGINNRQLTLNTQTENPAIARRIYSLLKEFYHLEAELSVRRKMKLKKNNLYIVRLRTGVKELLNDLSILKDDFQINEKVPEGLLTEESELRSYLRGAFLASGSVNNPETSRYHLEIYSLYESHNQMIADWINKYNLNARTTERRSGYIVYLKEAEHIADFLQLIGATNSMLKFEDVRIMRDMRNSVNRLVNCETANLNKVANASMKQINNIQFIDETVGLGELPPKLREVAEARLIHREVSLKELGELVPGGPISKSGINHRLRKINQYAEKLRA</sequence>
<dbReference type="EMBL" id="CP000422">
    <property type="protein sequence ID" value="ABJ67548.1"/>
    <property type="molecule type" value="Genomic_DNA"/>
</dbReference>
<dbReference type="RefSeq" id="WP_002834077.1">
    <property type="nucleotide sequence ID" value="NC_008525.1"/>
</dbReference>
<dbReference type="SMR" id="Q03GX4"/>
<dbReference type="STRING" id="278197.PEPE_0452"/>
<dbReference type="GeneID" id="33062375"/>
<dbReference type="KEGG" id="ppe:PEPE_0452"/>
<dbReference type="eggNOG" id="COG1481">
    <property type="taxonomic scope" value="Bacteria"/>
</dbReference>
<dbReference type="HOGENOM" id="CLU_053282_0_0_9"/>
<dbReference type="OrthoDB" id="401278at2"/>
<dbReference type="Proteomes" id="UP000000773">
    <property type="component" value="Chromosome"/>
</dbReference>
<dbReference type="GO" id="GO:0003677">
    <property type="term" value="F:DNA binding"/>
    <property type="evidence" value="ECO:0007669"/>
    <property type="project" value="UniProtKB-UniRule"/>
</dbReference>
<dbReference type="GO" id="GO:0051301">
    <property type="term" value="P:cell division"/>
    <property type="evidence" value="ECO:0007669"/>
    <property type="project" value="UniProtKB-UniRule"/>
</dbReference>
<dbReference type="GO" id="GO:0043937">
    <property type="term" value="P:regulation of sporulation"/>
    <property type="evidence" value="ECO:0007669"/>
    <property type="project" value="InterPro"/>
</dbReference>
<dbReference type="Gene3D" id="3.10.28.10">
    <property type="entry name" value="Homing endonucleases"/>
    <property type="match status" value="1"/>
</dbReference>
<dbReference type="HAMAP" id="MF_01420">
    <property type="entry name" value="HTH_type_WhiA"/>
    <property type="match status" value="1"/>
</dbReference>
<dbReference type="InterPro" id="IPR027434">
    <property type="entry name" value="Homing_endonucl"/>
</dbReference>
<dbReference type="InterPro" id="IPR018478">
    <property type="entry name" value="Sporu_reg_WhiA_N_dom"/>
</dbReference>
<dbReference type="InterPro" id="IPR003802">
    <property type="entry name" value="Sporulation_regulator_WhiA"/>
</dbReference>
<dbReference type="InterPro" id="IPR023054">
    <property type="entry name" value="Sporulation_regulator_WhiA_C"/>
</dbReference>
<dbReference type="InterPro" id="IPR039518">
    <property type="entry name" value="WhiA_LAGLIDADG_dom"/>
</dbReference>
<dbReference type="NCBIfam" id="TIGR00647">
    <property type="entry name" value="DNA_bind_WhiA"/>
    <property type="match status" value="1"/>
</dbReference>
<dbReference type="PANTHER" id="PTHR37307">
    <property type="entry name" value="CELL DIVISION PROTEIN WHIA-RELATED"/>
    <property type="match status" value="1"/>
</dbReference>
<dbReference type="PANTHER" id="PTHR37307:SF1">
    <property type="entry name" value="CELL DIVISION PROTEIN WHIA-RELATED"/>
    <property type="match status" value="1"/>
</dbReference>
<dbReference type="Pfam" id="PF02650">
    <property type="entry name" value="HTH_WhiA"/>
    <property type="match status" value="1"/>
</dbReference>
<dbReference type="Pfam" id="PF14527">
    <property type="entry name" value="LAGLIDADG_WhiA"/>
    <property type="match status" value="1"/>
</dbReference>
<dbReference type="Pfam" id="PF10298">
    <property type="entry name" value="WhiA_N"/>
    <property type="match status" value="1"/>
</dbReference>
<dbReference type="SUPFAM" id="SSF55608">
    <property type="entry name" value="Homing endonucleases"/>
    <property type="match status" value="1"/>
</dbReference>